<feature type="transit peptide" description="Mitochondrion" evidence="2">
    <location>
        <begin position="1"/>
        <end status="unknown"/>
    </location>
</feature>
<feature type="chain" id="PRO_0000034317" description="Probable mitochondrial import inner membrane translocase subunit tin-44">
    <location>
        <begin status="unknown"/>
        <end position="425"/>
    </location>
</feature>
<feature type="coiled-coil region" evidence="2">
    <location>
        <begin position="38"/>
        <end position="149"/>
    </location>
</feature>
<proteinExistence type="inferred from homology"/>
<reference key="1">
    <citation type="journal article" date="1998" name="Science">
        <title>Genome sequence of the nematode C. elegans: a platform for investigating biology.</title>
        <authorList>
            <consortium name="The C. elegans sequencing consortium"/>
        </authorList>
    </citation>
    <scope>NUCLEOTIDE SEQUENCE [LARGE SCALE GENOMIC DNA]</scope>
    <source>
        <strain>Bristol N2</strain>
    </source>
</reference>
<evidence type="ECO:0000250" key="1">
    <source>
        <dbReference type="UniProtKB" id="Q07914"/>
    </source>
</evidence>
<evidence type="ECO:0000255" key="2"/>
<evidence type="ECO:0000305" key="3"/>
<evidence type="ECO:0000312" key="4">
    <source>
        <dbReference type="WormBase" id="T09B4.9"/>
    </source>
</evidence>
<comment type="function">
    <text evidence="1">Essential component of the PAM complex, a complex required for the translocation of transit peptide-containing proteins from the inner membrane into the mitochondrial matrix in an ATP-dependent manner. Recruits mitochondrial HSP70 to drive protein translocation into the matrix using ATP as an energy source.</text>
</comment>
<comment type="subunit">
    <text evidence="1">Probable component of the PAM complex at least composed of a mitochondrial HSP70 protein, GrpE, tin-44, tim-16 and tim-14/dnj-21. The complex interacts with the tim-23 component of the TIM23 complex.</text>
</comment>
<comment type="subcellular location">
    <subcellularLocation>
        <location evidence="3">Mitochondrion inner membrane</location>
    </subcellularLocation>
</comment>
<comment type="similarity">
    <text evidence="3">Belongs to the Tim44 family.</text>
</comment>
<protein>
    <recommendedName>
        <fullName evidence="4">Probable mitochondrial import inner membrane translocase subunit tin-44</fullName>
    </recommendedName>
</protein>
<sequence length="425" mass="49398">MLSRICGNGIRLTRTRLQFQPSIVTFRDYSNPAPKRGFLNNLIDNVRDEMQKNKELQEHQQQLKARMQELNESDALKDARKKFEIVEKETLKSSEVVKQKIEELSDHMKKMVHEIQKTEAGKKMTEAGAEALKQARKAAEHVEKVAEKVGDTEVYKHVSTSMKTVKDEIDNIADVRMYSRPEALTKRTDGFDLEKERVVEANDSATDVTLHKDSKWYSGWKNFSESNTYYHKLLDWKIKYDESDNMAVRMMRGVTEKIGSVFSGQNEVSEVLTEIHKIDANFDKQEWLRFCETKIIPNILEAFIRFDLEVLQSWCHERAYTQLSTVVKEYQKMHFSTKDSRIIDINKVEMATGKMMEQGPVLIISFQVYMINVTKNADGKVVEGDPDNPKRINHIWVLCRDVEEYNPALAWKLLEVHMQETPLAL</sequence>
<gene>
    <name evidence="4" type="primary">tin-44</name>
    <name evidence="4" type="ORF">T09B4.9</name>
</gene>
<keyword id="KW-0175">Coiled coil</keyword>
<keyword id="KW-0472">Membrane</keyword>
<keyword id="KW-0496">Mitochondrion</keyword>
<keyword id="KW-0999">Mitochondrion inner membrane</keyword>
<keyword id="KW-0653">Protein transport</keyword>
<keyword id="KW-1185">Reference proteome</keyword>
<keyword id="KW-0809">Transit peptide</keyword>
<keyword id="KW-0811">Translocation</keyword>
<keyword id="KW-0813">Transport</keyword>
<organism>
    <name type="scientific">Caenorhabditis elegans</name>
    <dbReference type="NCBI Taxonomy" id="6239"/>
    <lineage>
        <taxon>Eukaryota</taxon>
        <taxon>Metazoa</taxon>
        <taxon>Ecdysozoa</taxon>
        <taxon>Nematoda</taxon>
        <taxon>Chromadorea</taxon>
        <taxon>Rhabditida</taxon>
        <taxon>Rhabditina</taxon>
        <taxon>Rhabditomorpha</taxon>
        <taxon>Rhabditoidea</taxon>
        <taxon>Rhabditidae</taxon>
        <taxon>Peloderinae</taxon>
        <taxon>Caenorhabditis</taxon>
    </lineage>
</organism>
<accession>O02161</accession>
<name>TIM44_CAEEL</name>
<dbReference type="EMBL" id="FO081495">
    <property type="protein sequence ID" value="CCD71993.1"/>
    <property type="molecule type" value="Genomic_DNA"/>
</dbReference>
<dbReference type="PIR" id="T25873">
    <property type="entry name" value="T25873"/>
</dbReference>
<dbReference type="RefSeq" id="NP_491780.1">
    <property type="nucleotide sequence ID" value="NM_059379.5"/>
</dbReference>
<dbReference type="SMR" id="O02161"/>
<dbReference type="BioGRID" id="37755">
    <property type="interactions" value="16"/>
</dbReference>
<dbReference type="DIP" id="DIP-24454N"/>
<dbReference type="FunCoup" id="O02161">
    <property type="interactions" value="2475"/>
</dbReference>
<dbReference type="IntAct" id="O02161">
    <property type="interactions" value="1"/>
</dbReference>
<dbReference type="STRING" id="6239.T09B4.9.1"/>
<dbReference type="PaxDb" id="6239-T09B4.9"/>
<dbReference type="PeptideAtlas" id="O02161"/>
<dbReference type="EnsemblMetazoa" id="T09B4.9.1">
    <property type="protein sequence ID" value="T09B4.9.1"/>
    <property type="gene ID" value="WBGene00020383"/>
</dbReference>
<dbReference type="GeneID" id="172302"/>
<dbReference type="KEGG" id="cel:CELE_T09B4.9"/>
<dbReference type="UCSC" id="T09B4.9">
    <property type="organism name" value="c. elegans"/>
</dbReference>
<dbReference type="AGR" id="WB:WBGene00020383"/>
<dbReference type="CTD" id="172302"/>
<dbReference type="WormBase" id="T09B4.9">
    <property type="protein sequence ID" value="CE13473"/>
    <property type="gene ID" value="WBGene00020383"/>
    <property type="gene designation" value="tin-44"/>
</dbReference>
<dbReference type="eggNOG" id="KOG2580">
    <property type="taxonomic scope" value="Eukaryota"/>
</dbReference>
<dbReference type="GeneTree" id="ENSGT00390000000051"/>
<dbReference type="HOGENOM" id="CLU_020932_1_1_1"/>
<dbReference type="InParanoid" id="O02161"/>
<dbReference type="OMA" id="NFQMEPF"/>
<dbReference type="OrthoDB" id="10265990at2759"/>
<dbReference type="PhylomeDB" id="O02161"/>
<dbReference type="SignaLink" id="O02161"/>
<dbReference type="PRO" id="PR:O02161"/>
<dbReference type="Proteomes" id="UP000001940">
    <property type="component" value="Chromosome I"/>
</dbReference>
<dbReference type="Bgee" id="WBGene00020383">
    <property type="expression patterns" value="Expressed in germ line (C elegans) and 4 other cell types or tissues"/>
</dbReference>
<dbReference type="GO" id="GO:0005743">
    <property type="term" value="C:mitochondrial inner membrane"/>
    <property type="evidence" value="ECO:0000318"/>
    <property type="project" value="GO_Central"/>
</dbReference>
<dbReference type="GO" id="GO:0051087">
    <property type="term" value="F:protein-folding chaperone binding"/>
    <property type="evidence" value="ECO:0000318"/>
    <property type="project" value="GO_Central"/>
</dbReference>
<dbReference type="GO" id="GO:0030150">
    <property type="term" value="P:protein import into mitochondrial matrix"/>
    <property type="evidence" value="ECO:0000318"/>
    <property type="project" value="GO_Central"/>
</dbReference>
<dbReference type="Gene3D" id="3.10.450.240">
    <property type="match status" value="1"/>
</dbReference>
<dbReference type="InterPro" id="IPR032710">
    <property type="entry name" value="NTF2-like_dom_sf"/>
</dbReference>
<dbReference type="InterPro" id="IPR017303">
    <property type="entry name" value="Tim44"/>
</dbReference>
<dbReference type="InterPro" id="IPR039544">
    <property type="entry name" value="Tim44-like"/>
</dbReference>
<dbReference type="InterPro" id="IPR007379">
    <property type="entry name" value="Tim44-like_dom"/>
</dbReference>
<dbReference type="NCBIfam" id="TIGR00984">
    <property type="entry name" value="3a0801s03tim44"/>
    <property type="match status" value="1"/>
</dbReference>
<dbReference type="PANTHER" id="PTHR10721">
    <property type="entry name" value="MITOCHONDRIAL IMPORT INNER MEMBRANE TRANSLOCASE SUBUNIT TIM44"/>
    <property type="match status" value="1"/>
</dbReference>
<dbReference type="PANTHER" id="PTHR10721:SF1">
    <property type="entry name" value="MITOCHONDRIAL IMPORT INNER MEMBRANE TRANSLOCASE SUBUNIT TIM44"/>
    <property type="match status" value="1"/>
</dbReference>
<dbReference type="Pfam" id="PF04280">
    <property type="entry name" value="Tim44"/>
    <property type="match status" value="1"/>
</dbReference>
<dbReference type="PIRSF" id="PIRSF037871">
    <property type="entry name" value="TIM44"/>
    <property type="match status" value="1"/>
</dbReference>
<dbReference type="SMART" id="SM00978">
    <property type="entry name" value="Tim44"/>
    <property type="match status" value="1"/>
</dbReference>
<dbReference type="SUPFAM" id="SSF54427">
    <property type="entry name" value="NTF2-like"/>
    <property type="match status" value="1"/>
</dbReference>